<proteinExistence type="inferred from homology"/>
<evidence type="ECO:0000255" key="1">
    <source>
        <dbReference type="HAMAP-Rule" id="MF_00123"/>
    </source>
</evidence>
<keyword id="KW-0030">Aminoacyl-tRNA synthetase</keyword>
<keyword id="KW-0067">ATP-binding</keyword>
<keyword id="KW-0963">Cytoplasm</keyword>
<keyword id="KW-0436">Ligase</keyword>
<keyword id="KW-0547">Nucleotide-binding</keyword>
<keyword id="KW-0648">Protein biosynthesis</keyword>
<keyword id="KW-1185">Reference proteome</keyword>
<sequence length="561" mass="61339">MIRAQQELLVALGDALAELAPEQPPIAAFESPKQAAHGDLAITSAMQLAKPLKRNPRELAQALIDALQRREAVQRWVAALEIAGPGFINLRLKDTTKQQIVAEVLASGTDFGRQPATSERALVEFVSANPTGPLHVGHGRQAALGDAICKLFETQGWQVTREFYYNDAGVQIGTLAASTQARLQGLKPGDAGWPESAYNGDYIADIAADFLARKTVKADDREFTASGDPADLDGIRQFAVAYLRHEQDLDLQAFGVRFDHYFLESSLYATGRVEATVGKLVAAGKTFEDGGALWLRTTDYGDDKDRVMKKSDGSYTYFVPDVAYHVNKWERGYHKVINIQGSDHHGTIARVRAGLQAADVGIPAGYPDYVLHKMVTVMRGGEEVKISKRAGSYVTLRDLIDWTGKDAVRFFLISRKADTEFVFDVDLALKKNDENPVYYVQYAHARICSVIVQWREQQAGDPATLAQADLARLVAPTEAALMLKLAAYPVMLSGAAESLAPHDVAFYLRDLAGAFHSYYAAERFLTDDPALSRARLALLAATAQVLRNGLAVLGVSAPDRM</sequence>
<protein>
    <recommendedName>
        <fullName evidence="1">Arginine--tRNA ligase</fullName>
        <ecNumber evidence="1">6.1.1.19</ecNumber>
    </recommendedName>
    <alternativeName>
        <fullName evidence="1">Arginyl-tRNA synthetase</fullName>
        <shortName evidence="1">ArgRS</shortName>
    </alternativeName>
</protein>
<reference key="1">
    <citation type="journal article" date="2007" name="J. Bacteriol.">
        <title>Whole-genome analysis of the methyl tert-butyl ether-degrading beta-proteobacterium Methylibium petroleiphilum PM1.</title>
        <authorList>
            <person name="Kane S.R."/>
            <person name="Chakicherla A.Y."/>
            <person name="Chain P.S.G."/>
            <person name="Schmidt R."/>
            <person name="Shin M.W."/>
            <person name="Legler T.C."/>
            <person name="Scow K.M."/>
            <person name="Larimer F.W."/>
            <person name="Lucas S.M."/>
            <person name="Richardson P.M."/>
            <person name="Hristova K.R."/>
        </authorList>
    </citation>
    <scope>NUCLEOTIDE SEQUENCE [LARGE SCALE GENOMIC DNA]</scope>
    <source>
        <strain>ATCC BAA-1232 / LMG 22953 / PM1</strain>
    </source>
</reference>
<organism>
    <name type="scientific">Methylibium petroleiphilum (strain ATCC BAA-1232 / LMG 22953 / PM1)</name>
    <dbReference type="NCBI Taxonomy" id="420662"/>
    <lineage>
        <taxon>Bacteria</taxon>
        <taxon>Pseudomonadati</taxon>
        <taxon>Pseudomonadota</taxon>
        <taxon>Betaproteobacteria</taxon>
        <taxon>Burkholderiales</taxon>
        <taxon>Sphaerotilaceae</taxon>
        <taxon>Methylibium</taxon>
    </lineage>
</organism>
<gene>
    <name evidence="1" type="primary">argS</name>
    <name type="ordered locus">Mpe_A0153</name>
</gene>
<comment type="catalytic activity">
    <reaction evidence="1">
        <text>tRNA(Arg) + L-arginine + ATP = L-arginyl-tRNA(Arg) + AMP + diphosphate</text>
        <dbReference type="Rhea" id="RHEA:20301"/>
        <dbReference type="Rhea" id="RHEA-COMP:9658"/>
        <dbReference type="Rhea" id="RHEA-COMP:9673"/>
        <dbReference type="ChEBI" id="CHEBI:30616"/>
        <dbReference type="ChEBI" id="CHEBI:32682"/>
        <dbReference type="ChEBI" id="CHEBI:33019"/>
        <dbReference type="ChEBI" id="CHEBI:78442"/>
        <dbReference type="ChEBI" id="CHEBI:78513"/>
        <dbReference type="ChEBI" id="CHEBI:456215"/>
        <dbReference type="EC" id="6.1.1.19"/>
    </reaction>
</comment>
<comment type="subunit">
    <text evidence="1">Monomer.</text>
</comment>
<comment type="subcellular location">
    <subcellularLocation>
        <location evidence="1">Cytoplasm</location>
    </subcellularLocation>
</comment>
<comment type="similarity">
    <text evidence="1">Belongs to the class-I aminoacyl-tRNA synthetase family.</text>
</comment>
<name>SYR_METPP</name>
<dbReference type="EC" id="6.1.1.19" evidence="1"/>
<dbReference type="EMBL" id="CP000555">
    <property type="protein sequence ID" value="ABM93115.1"/>
    <property type="molecule type" value="Genomic_DNA"/>
</dbReference>
<dbReference type="RefSeq" id="WP_011827754.1">
    <property type="nucleotide sequence ID" value="NC_008825.1"/>
</dbReference>
<dbReference type="SMR" id="A2SC26"/>
<dbReference type="STRING" id="420662.Mpe_A0153"/>
<dbReference type="KEGG" id="mpt:Mpe_A0153"/>
<dbReference type="eggNOG" id="COG0018">
    <property type="taxonomic scope" value="Bacteria"/>
</dbReference>
<dbReference type="HOGENOM" id="CLU_006406_0_1_4"/>
<dbReference type="Proteomes" id="UP000000366">
    <property type="component" value="Chromosome"/>
</dbReference>
<dbReference type="GO" id="GO:0005737">
    <property type="term" value="C:cytoplasm"/>
    <property type="evidence" value="ECO:0007669"/>
    <property type="project" value="UniProtKB-SubCell"/>
</dbReference>
<dbReference type="GO" id="GO:0004814">
    <property type="term" value="F:arginine-tRNA ligase activity"/>
    <property type="evidence" value="ECO:0007669"/>
    <property type="project" value="UniProtKB-UniRule"/>
</dbReference>
<dbReference type="GO" id="GO:0005524">
    <property type="term" value="F:ATP binding"/>
    <property type="evidence" value="ECO:0007669"/>
    <property type="project" value="UniProtKB-UniRule"/>
</dbReference>
<dbReference type="GO" id="GO:0006420">
    <property type="term" value="P:arginyl-tRNA aminoacylation"/>
    <property type="evidence" value="ECO:0007669"/>
    <property type="project" value="UniProtKB-UniRule"/>
</dbReference>
<dbReference type="CDD" id="cd00671">
    <property type="entry name" value="ArgRS_core"/>
    <property type="match status" value="1"/>
</dbReference>
<dbReference type="FunFam" id="1.10.730.10:FF:000008">
    <property type="entry name" value="Arginine--tRNA ligase"/>
    <property type="match status" value="1"/>
</dbReference>
<dbReference type="FunFam" id="3.40.50.620:FF:000062">
    <property type="entry name" value="Arginine--tRNA ligase"/>
    <property type="match status" value="1"/>
</dbReference>
<dbReference type="Gene3D" id="3.30.1360.70">
    <property type="entry name" value="Arginyl tRNA synthetase N-terminal domain"/>
    <property type="match status" value="1"/>
</dbReference>
<dbReference type="Gene3D" id="3.40.50.620">
    <property type="entry name" value="HUPs"/>
    <property type="match status" value="1"/>
</dbReference>
<dbReference type="Gene3D" id="1.10.730.10">
    <property type="entry name" value="Isoleucyl-tRNA Synthetase, Domain 1"/>
    <property type="match status" value="1"/>
</dbReference>
<dbReference type="HAMAP" id="MF_00123">
    <property type="entry name" value="Arg_tRNA_synth"/>
    <property type="match status" value="1"/>
</dbReference>
<dbReference type="InterPro" id="IPR001412">
    <property type="entry name" value="aa-tRNA-synth_I_CS"/>
</dbReference>
<dbReference type="InterPro" id="IPR001278">
    <property type="entry name" value="Arg-tRNA-ligase"/>
</dbReference>
<dbReference type="InterPro" id="IPR005148">
    <property type="entry name" value="Arg-tRNA-synth_N"/>
</dbReference>
<dbReference type="InterPro" id="IPR036695">
    <property type="entry name" value="Arg-tRNA-synth_N_sf"/>
</dbReference>
<dbReference type="InterPro" id="IPR035684">
    <property type="entry name" value="ArgRS_core"/>
</dbReference>
<dbReference type="InterPro" id="IPR008909">
    <property type="entry name" value="DALR_anticod-bd"/>
</dbReference>
<dbReference type="InterPro" id="IPR014729">
    <property type="entry name" value="Rossmann-like_a/b/a_fold"/>
</dbReference>
<dbReference type="InterPro" id="IPR009080">
    <property type="entry name" value="tRNAsynth_Ia_anticodon-bd"/>
</dbReference>
<dbReference type="NCBIfam" id="TIGR00456">
    <property type="entry name" value="argS"/>
    <property type="match status" value="1"/>
</dbReference>
<dbReference type="PANTHER" id="PTHR11956:SF5">
    <property type="entry name" value="ARGININE--TRNA LIGASE, CYTOPLASMIC"/>
    <property type="match status" value="1"/>
</dbReference>
<dbReference type="PANTHER" id="PTHR11956">
    <property type="entry name" value="ARGINYL-TRNA SYNTHETASE"/>
    <property type="match status" value="1"/>
</dbReference>
<dbReference type="Pfam" id="PF03485">
    <property type="entry name" value="Arg_tRNA_synt_N"/>
    <property type="match status" value="1"/>
</dbReference>
<dbReference type="Pfam" id="PF05746">
    <property type="entry name" value="DALR_1"/>
    <property type="match status" value="1"/>
</dbReference>
<dbReference type="Pfam" id="PF00750">
    <property type="entry name" value="tRNA-synt_1d"/>
    <property type="match status" value="1"/>
</dbReference>
<dbReference type="PRINTS" id="PR01038">
    <property type="entry name" value="TRNASYNTHARG"/>
</dbReference>
<dbReference type="SMART" id="SM01016">
    <property type="entry name" value="Arg_tRNA_synt_N"/>
    <property type="match status" value="1"/>
</dbReference>
<dbReference type="SMART" id="SM00836">
    <property type="entry name" value="DALR_1"/>
    <property type="match status" value="1"/>
</dbReference>
<dbReference type="SUPFAM" id="SSF47323">
    <property type="entry name" value="Anticodon-binding domain of a subclass of class I aminoacyl-tRNA synthetases"/>
    <property type="match status" value="1"/>
</dbReference>
<dbReference type="SUPFAM" id="SSF55190">
    <property type="entry name" value="Arginyl-tRNA synthetase (ArgRS), N-terminal 'additional' domain"/>
    <property type="match status" value="1"/>
</dbReference>
<dbReference type="SUPFAM" id="SSF52374">
    <property type="entry name" value="Nucleotidylyl transferase"/>
    <property type="match status" value="1"/>
</dbReference>
<dbReference type="PROSITE" id="PS00178">
    <property type="entry name" value="AA_TRNA_LIGASE_I"/>
    <property type="match status" value="1"/>
</dbReference>
<accession>A2SC26</accession>
<feature type="chain" id="PRO_1000018064" description="Arginine--tRNA ligase">
    <location>
        <begin position="1"/>
        <end position="561"/>
    </location>
</feature>
<feature type="short sequence motif" description="'HIGH' region">
    <location>
        <begin position="128"/>
        <end position="138"/>
    </location>
</feature>